<gene>
    <name evidence="1" type="primary">rplU</name>
    <name type="ordered locus">PC1_0558</name>
</gene>
<protein>
    <recommendedName>
        <fullName evidence="1">Large ribosomal subunit protein bL21</fullName>
    </recommendedName>
    <alternativeName>
        <fullName evidence="2">50S ribosomal protein L21</fullName>
    </alternativeName>
</protein>
<name>RL21_PECCP</name>
<feature type="chain" id="PRO_1000214898" description="Large ribosomal subunit protein bL21">
    <location>
        <begin position="1"/>
        <end position="103"/>
    </location>
</feature>
<keyword id="KW-0687">Ribonucleoprotein</keyword>
<keyword id="KW-0689">Ribosomal protein</keyword>
<keyword id="KW-0694">RNA-binding</keyword>
<keyword id="KW-0699">rRNA-binding</keyword>
<evidence type="ECO:0000255" key="1">
    <source>
        <dbReference type="HAMAP-Rule" id="MF_01363"/>
    </source>
</evidence>
<evidence type="ECO:0000305" key="2"/>
<comment type="function">
    <text evidence="1">This protein binds to 23S rRNA in the presence of protein L20.</text>
</comment>
<comment type="subunit">
    <text evidence="1">Part of the 50S ribosomal subunit. Contacts protein L20.</text>
</comment>
<comment type="similarity">
    <text evidence="1">Belongs to the bacterial ribosomal protein bL21 family.</text>
</comment>
<dbReference type="EMBL" id="CP001657">
    <property type="protein sequence ID" value="ACT11613.1"/>
    <property type="molecule type" value="Genomic_DNA"/>
</dbReference>
<dbReference type="RefSeq" id="WP_010283026.1">
    <property type="nucleotide sequence ID" value="NC_012917.1"/>
</dbReference>
<dbReference type="SMR" id="C6DKH6"/>
<dbReference type="STRING" id="561230.PC1_0558"/>
<dbReference type="GeneID" id="93388739"/>
<dbReference type="KEGG" id="pct:PC1_0558"/>
<dbReference type="eggNOG" id="COG0261">
    <property type="taxonomic scope" value="Bacteria"/>
</dbReference>
<dbReference type="HOGENOM" id="CLU_061463_3_3_6"/>
<dbReference type="OrthoDB" id="9813334at2"/>
<dbReference type="Proteomes" id="UP000002736">
    <property type="component" value="Chromosome"/>
</dbReference>
<dbReference type="GO" id="GO:0005737">
    <property type="term" value="C:cytoplasm"/>
    <property type="evidence" value="ECO:0007669"/>
    <property type="project" value="UniProtKB-ARBA"/>
</dbReference>
<dbReference type="GO" id="GO:1990904">
    <property type="term" value="C:ribonucleoprotein complex"/>
    <property type="evidence" value="ECO:0007669"/>
    <property type="project" value="UniProtKB-KW"/>
</dbReference>
<dbReference type="GO" id="GO:0005840">
    <property type="term" value="C:ribosome"/>
    <property type="evidence" value="ECO:0007669"/>
    <property type="project" value="UniProtKB-KW"/>
</dbReference>
<dbReference type="GO" id="GO:0019843">
    <property type="term" value="F:rRNA binding"/>
    <property type="evidence" value="ECO:0007669"/>
    <property type="project" value="UniProtKB-UniRule"/>
</dbReference>
<dbReference type="GO" id="GO:0003735">
    <property type="term" value="F:structural constituent of ribosome"/>
    <property type="evidence" value="ECO:0007669"/>
    <property type="project" value="InterPro"/>
</dbReference>
<dbReference type="GO" id="GO:0006412">
    <property type="term" value="P:translation"/>
    <property type="evidence" value="ECO:0007669"/>
    <property type="project" value="UniProtKB-UniRule"/>
</dbReference>
<dbReference type="HAMAP" id="MF_01363">
    <property type="entry name" value="Ribosomal_bL21"/>
    <property type="match status" value="1"/>
</dbReference>
<dbReference type="InterPro" id="IPR028909">
    <property type="entry name" value="bL21-like"/>
</dbReference>
<dbReference type="InterPro" id="IPR036164">
    <property type="entry name" value="bL21-like_sf"/>
</dbReference>
<dbReference type="InterPro" id="IPR001787">
    <property type="entry name" value="Ribosomal_bL21"/>
</dbReference>
<dbReference type="InterPro" id="IPR018258">
    <property type="entry name" value="Ribosomal_bL21_CS"/>
</dbReference>
<dbReference type="NCBIfam" id="TIGR00061">
    <property type="entry name" value="L21"/>
    <property type="match status" value="1"/>
</dbReference>
<dbReference type="PANTHER" id="PTHR21349">
    <property type="entry name" value="50S RIBOSOMAL PROTEIN L21"/>
    <property type="match status" value="1"/>
</dbReference>
<dbReference type="PANTHER" id="PTHR21349:SF0">
    <property type="entry name" value="LARGE RIBOSOMAL SUBUNIT PROTEIN BL21M"/>
    <property type="match status" value="1"/>
</dbReference>
<dbReference type="Pfam" id="PF00829">
    <property type="entry name" value="Ribosomal_L21p"/>
    <property type="match status" value="1"/>
</dbReference>
<dbReference type="SUPFAM" id="SSF141091">
    <property type="entry name" value="L21p-like"/>
    <property type="match status" value="1"/>
</dbReference>
<dbReference type="PROSITE" id="PS01169">
    <property type="entry name" value="RIBOSOMAL_L21"/>
    <property type="match status" value="1"/>
</dbReference>
<sequence length="103" mass="11549">MYAVFQSGGKQHRVSEGQTVRLEKLDIATGEAVEFDQVLMVANGEEIKIGVPFVDGGKIKAEVVAHGRGEKVKIVKFRRRKHYRKQAGHRQWFTDVKITGISA</sequence>
<proteinExistence type="inferred from homology"/>
<organism>
    <name type="scientific">Pectobacterium carotovorum subsp. carotovorum (strain PC1)</name>
    <dbReference type="NCBI Taxonomy" id="561230"/>
    <lineage>
        <taxon>Bacteria</taxon>
        <taxon>Pseudomonadati</taxon>
        <taxon>Pseudomonadota</taxon>
        <taxon>Gammaproteobacteria</taxon>
        <taxon>Enterobacterales</taxon>
        <taxon>Pectobacteriaceae</taxon>
        <taxon>Pectobacterium</taxon>
    </lineage>
</organism>
<reference key="1">
    <citation type="submission" date="2009-07" db="EMBL/GenBank/DDBJ databases">
        <title>Complete sequence of Pectobacterium carotovorum subsp. carotovorum PC1.</title>
        <authorList>
            <consortium name="US DOE Joint Genome Institute"/>
            <person name="Lucas S."/>
            <person name="Copeland A."/>
            <person name="Lapidus A."/>
            <person name="Glavina del Rio T."/>
            <person name="Tice H."/>
            <person name="Bruce D."/>
            <person name="Goodwin L."/>
            <person name="Pitluck S."/>
            <person name="Munk A.C."/>
            <person name="Brettin T."/>
            <person name="Detter J.C."/>
            <person name="Han C."/>
            <person name="Tapia R."/>
            <person name="Larimer F."/>
            <person name="Land M."/>
            <person name="Hauser L."/>
            <person name="Kyrpides N."/>
            <person name="Mikhailova N."/>
            <person name="Balakrishnan V."/>
            <person name="Glasner J."/>
            <person name="Perna N.T."/>
        </authorList>
    </citation>
    <scope>NUCLEOTIDE SEQUENCE [LARGE SCALE GENOMIC DNA]</scope>
    <source>
        <strain>PC1</strain>
    </source>
</reference>
<accession>C6DKH6</accession>